<protein>
    <recommendedName>
        <fullName>TRAF-type zinc finger domain-containing protein 1</fullName>
    </recommendedName>
    <alternativeName>
        <fullName>Protein FLN29</fullName>
    </alternativeName>
</protein>
<accession>Q3UDK1</accession>
<accession>Q8CFI8</accession>
<name>TRAD1_MOUSE</name>
<gene>
    <name type="primary">Trafd1</name>
    <name type="synonym">Fln29</name>
</gene>
<feature type="initiator methionine" description="Removed" evidence="1">
    <location>
        <position position="1"/>
    </location>
</feature>
<feature type="chain" id="PRO_0000278459" description="TRAF-type zinc finger domain-containing protein 1">
    <location>
        <begin position="2"/>
        <end position="580"/>
    </location>
</feature>
<feature type="zinc finger region" description="TRAF-type" evidence="3">
    <location>
        <begin position="27"/>
        <end position="103"/>
    </location>
</feature>
<feature type="region of interest" description="Disordered" evidence="4">
    <location>
        <begin position="395"/>
        <end position="453"/>
    </location>
</feature>
<feature type="region of interest" description="Disordered" evidence="4">
    <location>
        <begin position="468"/>
        <end position="509"/>
    </location>
</feature>
<feature type="region of interest" description="Disordered" evidence="4">
    <location>
        <begin position="524"/>
        <end position="580"/>
    </location>
</feature>
<feature type="compositionally biased region" description="Polar residues" evidence="4">
    <location>
        <begin position="407"/>
        <end position="417"/>
    </location>
</feature>
<feature type="modified residue" description="N-acetylalanine" evidence="1">
    <location>
        <position position="2"/>
    </location>
</feature>
<feature type="modified residue" description="Phosphoserine" evidence="1">
    <location>
        <position position="278"/>
    </location>
</feature>
<feature type="modified residue" description="Phosphoserine" evidence="1">
    <location>
        <position position="320"/>
    </location>
</feature>
<feature type="modified residue" description="Phosphoserine" evidence="1">
    <location>
        <position position="326"/>
    </location>
</feature>
<feature type="modified residue" description="Phosphoserine" evidence="1">
    <location>
        <position position="327"/>
    </location>
</feature>
<feature type="modified residue" description="Phosphoserine" evidence="1">
    <location>
        <position position="409"/>
    </location>
</feature>
<feature type="modified residue" description="Phosphoserine" evidence="1">
    <location>
        <position position="415"/>
    </location>
</feature>
<feature type="modified residue" description="Phosphoserine" evidence="1">
    <location>
        <position position="430"/>
    </location>
</feature>
<feature type="modified residue" description="Phosphoserine" evidence="2">
    <location>
        <position position="450"/>
    </location>
</feature>
<feature type="modified residue" description="Phosphoserine" evidence="1">
    <location>
        <position position="469"/>
    </location>
</feature>
<feature type="modified residue" description="Phosphoserine" evidence="2">
    <location>
        <position position="532"/>
    </location>
</feature>
<feature type="splice variant" id="VSP_023294" description="In isoform 2." evidence="7">
    <original>RYGAG</original>
    <variation>S</variation>
    <location>
        <begin position="535"/>
        <end position="539"/>
    </location>
</feature>
<feature type="mutagenesis site" description="No effect on TRAF6-induced NF-kappa-B activation." evidence="5">
    <original>E</original>
    <variation>A</variation>
    <location>
        <position position="294"/>
    </location>
</feature>
<feature type="sequence conflict" description="In Ref. 2; AAH38396." evidence="8" ref="2">
    <original>I</original>
    <variation>V</variation>
    <location>
        <position position="328"/>
    </location>
</feature>
<feature type="sequence conflict" description="In Ref. 2; AAH38396." evidence="8" ref="2">
    <original>V</original>
    <variation>M</variation>
    <location>
        <position position="331"/>
    </location>
</feature>
<dbReference type="EMBL" id="AK150038">
    <property type="protein sequence ID" value="BAE29260.1"/>
    <property type="molecule type" value="mRNA"/>
</dbReference>
<dbReference type="EMBL" id="BC038396">
    <property type="protein sequence ID" value="AAH38396.1"/>
    <property type="molecule type" value="mRNA"/>
</dbReference>
<dbReference type="CCDS" id="CCDS51638.1">
    <molecule id="Q3UDK1-1"/>
</dbReference>
<dbReference type="CCDS" id="CCDS51639.1">
    <molecule id="Q3UDK1-2"/>
</dbReference>
<dbReference type="RefSeq" id="NP_001156942.1">
    <molecule id="Q3UDK1-1"/>
    <property type="nucleotide sequence ID" value="NM_001163470.1"/>
</dbReference>
<dbReference type="RefSeq" id="NP_001346876.1">
    <molecule id="Q3UDK1-2"/>
    <property type="nucleotide sequence ID" value="NM_001359947.1"/>
</dbReference>
<dbReference type="RefSeq" id="NP_758479.2">
    <molecule id="Q3UDK1-2"/>
    <property type="nucleotide sequence ID" value="NM_172275.2"/>
</dbReference>
<dbReference type="RefSeq" id="XP_006530365.1">
    <molecule id="Q3UDK1-1"/>
    <property type="nucleotide sequence ID" value="XM_006530302.4"/>
</dbReference>
<dbReference type="RefSeq" id="XP_011246499.1">
    <molecule id="Q3UDK1-1"/>
    <property type="nucleotide sequence ID" value="XM_011248197.4"/>
</dbReference>
<dbReference type="RefSeq" id="XP_017176353.1">
    <molecule id="Q3UDK1-1"/>
    <property type="nucleotide sequence ID" value="XM_017320864.2"/>
</dbReference>
<dbReference type="RefSeq" id="XP_017176354.1">
    <molecule id="Q3UDK1-2"/>
    <property type="nucleotide sequence ID" value="XM_017320865.2"/>
</dbReference>
<dbReference type="RefSeq" id="XP_017176355.1">
    <property type="nucleotide sequence ID" value="XM_017320866.1"/>
</dbReference>
<dbReference type="RefSeq" id="XP_030110288.1">
    <molecule id="Q3UDK1-1"/>
    <property type="nucleotide sequence ID" value="XM_030254428.1"/>
</dbReference>
<dbReference type="BioGRID" id="231158">
    <property type="interactions" value="1"/>
</dbReference>
<dbReference type="FunCoup" id="Q3UDK1">
    <property type="interactions" value="2632"/>
</dbReference>
<dbReference type="IntAct" id="Q3UDK1">
    <property type="interactions" value="3"/>
</dbReference>
<dbReference type="MINT" id="Q3UDK1"/>
<dbReference type="STRING" id="10090.ENSMUSP00000047475"/>
<dbReference type="iPTMnet" id="Q3UDK1"/>
<dbReference type="PhosphoSitePlus" id="Q3UDK1"/>
<dbReference type="SwissPalm" id="Q3UDK1"/>
<dbReference type="PaxDb" id="10090-ENSMUSP00000047475"/>
<dbReference type="PeptideAtlas" id="Q3UDK1"/>
<dbReference type="ProteomicsDB" id="297519">
    <molecule id="Q3UDK1-1"/>
</dbReference>
<dbReference type="ProteomicsDB" id="297520">
    <molecule id="Q3UDK1-2"/>
</dbReference>
<dbReference type="Pumba" id="Q3UDK1"/>
<dbReference type="Antibodypedia" id="18647">
    <property type="antibodies" value="218 antibodies from 26 providers"/>
</dbReference>
<dbReference type="DNASU" id="231712"/>
<dbReference type="Ensembl" id="ENSMUST00000042312.14">
    <molecule id="Q3UDK1-1"/>
    <property type="protein sequence ID" value="ENSMUSP00000047475.8"/>
    <property type="gene ID" value="ENSMUSG00000042726.15"/>
</dbReference>
<dbReference type="Ensembl" id="ENSMUST00000120784.8">
    <molecule id="Q3UDK1-2"/>
    <property type="protein sequence ID" value="ENSMUSP00000113910.2"/>
    <property type="gene ID" value="ENSMUSG00000042726.15"/>
</dbReference>
<dbReference type="GeneID" id="231712"/>
<dbReference type="KEGG" id="mmu:231712"/>
<dbReference type="UCSC" id="uc008ziy.2">
    <molecule id="Q3UDK1-2"/>
    <property type="organism name" value="mouse"/>
</dbReference>
<dbReference type="UCSC" id="uc008ziz.2">
    <molecule id="Q3UDK1-1"/>
    <property type="organism name" value="mouse"/>
</dbReference>
<dbReference type="AGR" id="MGI:1923551"/>
<dbReference type="CTD" id="10906"/>
<dbReference type="MGI" id="MGI:1923551">
    <property type="gene designation" value="Trafd1"/>
</dbReference>
<dbReference type="VEuPathDB" id="HostDB:ENSMUSG00000042726"/>
<dbReference type="eggNOG" id="ENOG502QQRU">
    <property type="taxonomic scope" value="Eukaryota"/>
</dbReference>
<dbReference type="GeneTree" id="ENSGT00530000063869"/>
<dbReference type="HOGENOM" id="CLU_034057_0_0_1"/>
<dbReference type="InParanoid" id="Q3UDK1"/>
<dbReference type="OMA" id="AHQSSEC"/>
<dbReference type="OrthoDB" id="77003at9989"/>
<dbReference type="PhylomeDB" id="Q3UDK1"/>
<dbReference type="TreeFam" id="TF331416"/>
<dbReference type="BioGRID-ORCS" id="231712">
    <property type="hits" value="2 hits in 78 CRISPR screens"/>
</dbReference>
<dbReference type="ChiTaRS" id="Trafd1">
    <property type="organism name" value="mouse"/>
</dbReference>
<dbReference type="PRO" id="PR:Q3UDK1"/>
<dbReference type="Proteomes" id="UP000000589">
    <property type="component" value="Chromosome 5"/>
</dbReference>
<dbReference type="RNAct" id="Q3UDK1">
    <property type="molecule type" value="protein"/>
</dbReference>
<dbReference type="Bgee" id="ENSMUSG00000042726">
    <property type="expression patterns" value="Expressed in spermatocyte and 262 other cell types or tissues"/>
</dbReference>
<dbReference type="ExpressionAtlas" id="Q3UDK1">
    <property type="expression patterns" value="baseline and differential"/>
</dbReference>
<dbReference type="GO" id="GO:0008270">
    <property type="term" value="F:zinc ion binding"/>
    <property type="evidence" value="ECO:0007669"/>
    <property type="project" value="UniProtKB-KW"/>
</dbReference>
<dbReference type="GO" id="GO:0045824">
    <property type="term" value="P:negative regulation of innate immune response"/>
    <property type="evidence" value="ECO:0000315"/>
    <property type="project" value="UniProtKB"/>
</dbReference>
<dbReference type="FunFam" id="3.30.40.10:FF:000378">
    <property type="entry name" value="TRAF-type zinc finger domain-containing 1"/>
    <property type="match status" value="1"/>
</dbReference>
<dbReference type="FunFam" id="3.30.40.10:FF:000402">
    <property type="entry name" value="TRAF-type zinc finger domain-containing protein 1"/>
    <property type="match status" value="1"/>
</dbReference>
<dbReference type="Gene3D" id="3.30.40.10">
    <property type="entry name" value="Zinc/RING finger domain, C3HC4 (zinc finger)"/>
    <property type="match status" value="2"/>
</dbReference>
<dbReference type="InterPro" id="IPR051986">
    <property type="entry name" value="Innate_Immune_Apopt_Reg"/>
</dbReference>
<dbReference type="InterPro" id="IPR049439">
    <property type="entry name" value="TRAFD1-XIAF1_Znf"/>
</dbReference>
<dbReference type="InterPro" id="IPR013083">
    <property type="entry name" value="Znf_RING/FYVE/PHD"/>
</dbReference>
<dbReference type="InterPro" id="IPR001293">
    <property type="entry name" value="Znf_TRAF"/>
</dbReference>
<dbReference type="PANTHER" id="PTHR16295:SF19">
    <property type="entry name" value="TRAF-TYPE ZINC FINGER DOMAIN-CONTAINING PROTEIN 1"/>
    <property type="match status" value="1"/>
</dbReference>
<dbReference type="PANTHER" id="PTHR16295">
    <property type="entry name" value="TRAF-TYPE ZINC FINGER PROTEIN-RELATED"/>
    <property type="match status" value="1"/>
</dbReference>
<dbReference type="Pfam" id="PF21366">
    <property type="entry name" value="TRAFD1-XIAF1_ZnF"/>
    <property type="match status" value="1"/>
</dbReference>
<dbReference type="PROSITE" id="PS50145">
    <property type="entry name" value="ZF_TRAF"/>
    <property type="match status" value="1"/>
</dbReference>
<keyword id="KW-0007">Acetylation</keyword>
<keyword id="KW-0025">Alternative splicing</keyword>
<keyword id="KW-0479">Metal-binding</keyword>
<keyword id="KW-0597">Phosphoprotein</keyword>
<keyword id="KW-1185">Reference proteome</keyword>
<keyword id="KW-0862">Zinc</keyword>
<keyword id="KW-0863">Zinc-finger</keyword>
<proteinExistence type="evidence at protein level"/>
<sequence>MAEFRDDQASRLCDNCKKEIPVFNFTIHEIHCQRNIGVCPVCKEPFPKSDMDIHMAAEHCQVTCKCNKKLEKRQLKQHAETECPLRLAVCQHCDLELSVVKLKEHEDYCGARTELCGSCGRNVLVKELKTHPEVCGRVEEEKRTEAAIPPEAYDEPWSQDRIWIASQLLRQIEALDPPMRLPGRPLQAFEADPFYSRTTSQRSMAAQFPVQNNLFEEQERQERNRSRQSPKDSAENNAHLDFMLALSLQNEGQATSMVEQGFWESVPEADPARAGPTSLGDIKGAADEILLPCEFCEELYPEELLIDHQTSCNPSHALRSLNTGSSSIRGVEDPGTIFQNFLQQATSNQFDTLMGLSSSAAVEDSIIIPCEFCGVQLEEEVLFYHQDQCDQRPATANHRAVEGIPAQDSQPENTSAELSRRRVKHQGDLSSGYMDDVKPESVKGPTYSMSPNRTMNNVASCNRLLNLPSGPRSDCQRSPPGVLKLNNSDSQDIRGQMRGSQNGPIASGHAPVIHSIQNLYPENFAPSFPHGSPGRYGAGGRSEGGRSSRVSPAAAGYHSRAAKAKPPKQQGAGDAEEEEE</sequence>
<reference key="1">
    <citation type="journal article" date="2005" name="Science">
        <title>The transcriptional landscape of the mammalian genome.</title>
        <authorList>
            <person name="Carninci P."/>
            <person name="Kasukawa T."/>
            <person name="Katayama S."/>
            <person name="Gough J."/>
            <person name="Frith M.C."/>
            <person name="Maeda N."/>
            <person name="Oyama R."/>
            <person name="Ravasi T."/>
            <person name="Lenhard B."/>
            <person name="Wells C."/>
            <person name="Kodzius R."/>
            <person name="Shimokawa K."/>
            <person name="Bajic V.B."/>
            <person name="Brenner S.E."/>
            <person name="Batalov S."/>
            <person name="Forrest A.R."/>
            <person name="Zavolan M."/>
            <person name="Davis M.J."/>
            <person name="Wilming L.G."/>
            <person name="Aidinis V."/>
            <person name="Allen J.E."/>
            <person name="Ambesi-Impiombato A."/>
            <person name="Apweiler R."/>
            <person name="Aturaliya R.N."/>
            <person name="Bailey T.L."/>
            <person name="Bansal M."/>
            <person name="Baxter L."/>
            <person name="Beisel K.W."/>
            <person name="Bersano T."/>
            <person name="Bono H."/>
            <person name="Chalk A.M."/>
            <person name="Chiu K.P."/>
            <person name="Choudhary V."/>
            <person name="Christoffels A."/>
            <person name="Clutterbuck D.R."/>
            <person name="Crowe M.L."/>
            <person name="Dalla E."/>
            <person name="Dalrymple B.P."/>
            <person name="de Bono B."/>
            <person name="Della Gatta G."/>
            <person name="di Bernardo D."/>
            <person name="Down T."/>
            <person name="Engstrom P."/>
            <person name="Fagiolini M."/>
            <person name="Faulkner G."/>
            <person name="Fletcher C.F."/>
            <person name="Fukushima T."/>
            <person name="Furuno M."/>
            <person name="Futaki S."/>
            <person name="Gariboldi M."/>
            <person name="Georgii-Hemming P."/>
            <person name="Gingeras T.R."/>
            <person name="Gojobori T."/>
            <person name="Green R.E."/>
            <person name="Gustincich S."/>
            <person name="Harbers M."/>
            <person name="Hayashi Y."/>
            <person name="Hensch T.K."/>
            <person name="Hirokawa N."/>
            <person name="Hill D."/>
            <person name="Huminiecki L."/>
            <person name="Iacono M."/>
            <person name="Ikeo K."/>
            <person name="Iwama A."/>
            <person name="Ishikawa T."/>
            <person name="Jakt M."/>
            <person name="Kanapin A."/>
            <person name="Katoh M."/>
            <person name="Kawasawa Y."/>
            <person name="Kelso J."/>
            <person name="Kitamura H."/>
            <person name="Kitano H."/>
            <person name="Kollias G."/>
            <person name="Krishnan S.P."/>
            <person name="Kruger A."/>
            <person name="Kummerfeld S.K."/>
            <person name="Kurochkin I.V."/>
            <person name="Lareau L.F."/>
            <person name="Lazarevic D."/>
            <person name="Lipovich L."/>
            <person name="Liu J."/>
            <person name="Liuni S."/>
            <person name="McWilliam S."/>
            <person name="Madan Babu M."/>
            <person name="Madera M."/>
            <person name="Marchionni L."/>
            <person name="Matsuda H."/>
            <person name="Matsuzawa S."/>
            <person name="Miki H."/>
            <person name="Mignone F."/>
            <person name="Miyake S."/>
            <person name="Morris K."/>
            <person name="Mottagui-Tabar S."/>
            <person name="Mulder N."/>
            <person name="Nakano N."/>
            <person name="Nakauchi H."/>
            <person name="Ng P."/>
            <person name="Nilsson R."/>
            <person name="Nishiguchi S."/>
            <person name="Nishikawa S."/>
            <person name="Nori F."/>
            <person name="Ohara O."/>
            <person name="Okazaki Y."/>
            <person name="Orlando V."/>
            <person name="Pang K.C."/>
            <person name="Pavan W.J."/>
            <person name="Pavesi G."/>
            <person name="Pesole G."/>
            <person name="Petrovsky N."/>
            <person name="Piazza S."/>
            <person name="Reed J."/>
            <person name="Reid J.F."/>
            <person name="Ring B.Z."/>
            <person name="Ringwald M."/>
            <person name="Rost B."/>
            <person name="Ruan Y."/>
            <person name="Salzberg S.L."/>
            <person name="Sandelin A."/>
            <person name="Schneider C."/>
            <person name="Schoenbach C."/>
            <person name="Sekiguchi K."/>
            <person name="Semple C.A."/>
            <person name="Seno S."/>
            <person name="Sessa L."/>
            <person name="Sheng Y."/>
            <person name="Shibata Y."/>
            <person name="Shimada H."/>
            <person name="Shimada K."/>
            <person name="Silva D."/>
            <person name="Sinclair B."/>
            <person name="Sperling S."/>
            <person name="Stupka E."/>
            <person name="Sugiura K."/>
            <person name="Sultana R."/>
            <person name="Takenaka Y."/>
            <person name="Taki K."/>
            <person name="Tammoja K."/>
            <person name="Tan S.L."/>
            <person name="Tang S."/>
            <person name="Taylor M.S."/>
            <person name="Tegner J."/>
            <person name="Teichmann S.A."/>
            <person name="Ueda H.R."/>
            <person name="van Nimwegen E."/>
            <person name="Verardo R."/>
            <person name="Wei C.L."/>
            <person name="Yagi K."/>
            <person name="Yamanishi H."/>
            <person name="Zabarovsky E."/>
            <person name="Zhu S."/>
            <person name="Zimmer A."/>
            <person name="Hide W."/>
            <person name="Bult C."/>
            <person name="Grimmond S.M."/>
            <person name="Teasdale R.D."/>
            <person name="Liu E.T."/>
            <person name="Brusic V."/>
            <person name="Quackenbush J."/>
            <person name="Wahlestedt C."/>
            <person name="Mattick J.S."/>
            <person name="Hume D.A."/>
            <person name="Kai C."/>
            <person name="Sasaki D."/>
            <person name="Tomaru Y."/>
            <person name="Fukuda S."/>
            <person name="Kanamori-Katayama M."/>
            <person name="Suzuki M."/>
            <person name="Aoki J."/>
            <person name="Arakawa T."/>
            <person name="Iida J."/>
            <person name="Imamura K."/>
            <person name="Itoh M."/>
            <person name="Kato T."/>
            <person name="Kawaji H."/>
            <person name="Kawagashira N."/>
            <person name="Kawashima T."/>
            <person name="Kojima M."/>
            <person name="Kondo S."/>
            <person name="Konno H."/>
            <person name="Nakano K."/>
            <person name="Ninomiya N."/>
            <person name="Nishio T."/>
            <person name="Okada M."/>
            <person name="Plessy C."/>
            <person name="Shibata K."/>
            <person name="Shiraki T."/>
            <person name="Suzuki S."/>
            <person name="Tagami M."/>
            <person name="Waki K."/>
            <person name="Watahiki A."/>
            <person name="Okamura-Oho Y."/>
            <person name="Suzuki H."/>
            <person name="Kawai J."/>
            <person name="Hayashizaki Y."/>
        </authorList>
    </citation>
    <scope>NUCLEOTIDE SEQUENCE [LARGE SCALE MRNA] (ISOFORM 1)</scope>
    <source>
        <strain>C57BL/6J</strain>
        <tissue>Bone marrow</tissue>
    </source>
</reference>
<reference key="2">
    <citation type="journal article" date="2004" name="Genome Res.">
        <title>The status, quality, and expansion of the NIH full-length cDNA project: the Mammalian Gene Collection (MGC).</title>
        <authorList>
            <consortium name="The MGC Project Team"/>
        </authorList>
    </citation>
    <scope>NUCLEOTIDE SEQUENCE [LARGE SCALE MRNA] (ISOFORM 2)</scope>
    <source>
        <tissue>Mammary tumor</tissue>
    </source>
</reference>
<reference key="3">
    <citation type="journal article" date="2005" name="J. Biol. Chem.">
        <title>FLN29, a novel interferon- and LPS-inducible gene acting as a negative regulator of toll-like receptor signaling.</title>
        <authorList>
            <person name="Mashima R."/>
            <person name="Saeki K."/>
            <person name="Aki D."/>
            <person name="Minoda Y."/>
            <person name="Takaki H."/>
            <person name="Sanada T."/>
            <person name="Kobayashi T."/>
            <person name="Aburatani H."/>
            <person name="Yamanashi Y."/>
            <person name="Yoshimura A."/>
        </authorList>
    </citation>
    <scope>FUNCTION</scope>
    <scope>TISSUE SPECIFICITY</scope>
    <scope>INDUCTION</scope>
    <scope>INTERACTION WITH TRAF6</scope>
    <scope>MUTAGENESIS OF GLU-294</scope>
</reference>
<reference key="4">
    <citation type="journal article" date="2008" name="J. Biol. Chem.">
        <title>FLN29 deficiency reveals its negative regulatory role in the Toll-like receptor (TLR) and retinoic acid-inducible gene I (RIG-I)-like helicase signaling pathway.</title>
        <authorList>
            <person name="Sanada T."/>
            <person name="Takaesu G."/>
            <person name="Mashima R."/>
            <person name="Yoshida R."/>
            <person name="Kobayashi T."/>
            <person name="Yoshimura A."/>
        </authorList>
    </citation>
    <scope>DISRUPTION PHENOTYPE</scope>
    <scope>FUNCTION</scope>
    <scope>INTERACTION WITH MAVS; TICAM1; TRAF1; TRAF2; TRAF3 AND TRAF6</scope>
</reference>
<reference key="5">
    <citation type="journal article" date="2010" name="Cell">
        <title>A tissue-specific atlas of mouse protein phosphorylation and expression.</title>
        <authorList>
            <person name="Huttlin E.L."/>
            <person name="Jedrychowski M.P."/>
            <person name="Elias J.E."/>
            <person name="Goswami T."/>
            <person name="Rad R."/>
            <person name="Beausoleil S.A."/>
            <person name="Villen J."/>
            <person name="Haas W."/>
            <person name="Sowa M.E."/>
            <person name="Gygi S.P."/>
        </authorList>
    </citation>
    <scope>IDENTIFICATION BY MASS SPECTROMETRY [LARGE SCALE ANALYSIS]</scope>
    <source>
        <tissue>Spleen</tissue>
        <tissue>Testis</tissue>
    </source>
</reference>
<comment type="function">
    <text evidence="5 6">Negative feedback regulator that controls excessive innate immune responses. Regulates both Toll-like receptor 4 (TLR4) and DDX58/RIG1-like helicases (RLH) pathways. May inhibit the LTR pathway by direct interaction with TRAF6 and attenuation of NF-kappa-B activation. May negatively regulate the RLH pathway downstream from MAVS and upstream of NF-kappa-B and IRF3.</text>
</comment>
<comment type="subunit">
    <text evidence="5 6">Interacts with MAVS, TICAM1, TRAF1, TRAF2, TRAF3 and TRAF6.</text>
</comment>
<comment type="interaction">
    <interactant intactId="EBI-1396948">
        <id>Q3UDK1</id>
    </interactant>
    <interactant intactId="EBI-448028">
        <id>P70196</id>
        <label>Traf6</label>
    </interactant>
    <organismsDiffer>false</organismsDiffer>
    <experiments>2</experiments>
</comment>
<comment type="alternative products">
    <event type="alternative splicing"/>
    <isoform>
        <id>Q3UDK1-1</id>
        <name>1</name>
        <sequence type="displayed"/>
    </isoform>
    <isoform>
        <id>Q3UDK1-2</id>
        <name>2</name>
        <sequence type="described" ref="VSP_023294"/>
    </isoform>
</comment>
<comment type="tissue specificity">
    <text evidence="5">Expressed in skeletal muscle, brain, liver, kidney, spleen and bone marrow. Expression depends on STAT1.</text>
</comment>
<comment type="induction">
    <text evidence="5">By lipopolysaccharide (LPS), IFNB1 and IFNG, IFNB1 being most rapid and potent inducer (at protein level). Not induced by anti-inflammatory cytokines, such as IL4 and IL10, which also inhibit LPS induction of TRAFD1.</text>
</comment>
<comment type="disruption phenotype">
    <text evidence="6">Mice show no gross developmental abnormalities, but exhibit an increased susceptibility to LPS-induced septic shock and are more sensitive to poly(I:C) shock, suffering more severe hepatic damage than wild-type animals. In response to LPS-stimulation, bone marrow-derived dendritic cells display an increased production of pro-inflammatory cytokines, such as IL6, TNF and IL12, as well as elevated IKK and JNK activation, compared to wild-type mice. Mutant embryonic fibroblasts are more resistant to vesicular stomatitis virus (VSV)-induced cytopathic effect.</text>
</comment>
<organism>
    <name type="scientific">Mus musculus</name>
    <name type="common">Mouse</name>
    <dbReference type="NCBI Taxonomy" id="10090"/>
    <lineage>
        <taxon>Eukaryota</taxon>
        <taxon>Metazoa</taxon>
        <taxon>Chordata</taxon>
        <taxon>Craniata</taxon>
        <taxon>Vertebrata</taxon>
        <taxon>Euteleostomi</taxon>
        <taxon>Mammalia</taxon>
        <taxon>Eutheria</taxon>
        <taxon>Euarchontoglires</taxon>
        <taxon>Glires</taxon>
        <taxon>Rodentia</taxon>
        <taxon>Myomorpha</taxon>
        <taxon>Muroidea</taxon>
        <taxon>Muridae</taxon>
        <taxon>Murinae</taxon>
        <taxon>Mus</taxon>
        <taxon>Mus</taxon>
    </lineage>
</organism>
<evidence type="ECO:0000250" key="1">
    <source>
        <dbReference type="UniProtKB" id="O14545"/>
    </source>
</evidence>
<evidence type="ECO:0000250" key="2">
    <source>
        <dbReference type="UniProtKB" id="Q99MM4"/>
    </source>
</evidence>
<evidence type="ECO:0000255" key="3">
    <source>
        <dbReference type="PROSITE-ProRule" id="PRU00207"/>
    </source>
</evidence>
<evidence type="ECO:0000256" key="4">
    <source>
        <dbReference type="SAM" id="MobiDB-lite"/>
    </source>
</evidence>
<evidence type="ECO:0000269" key="5">
    <source>
    </source>
</evidence>
<evidence type="ECO:0000269" key="6">
    <source>
    </source>
</evidence>
<evidence type="ECO:0000303" key="7">
    <source>
    </source>
</evidence>
<evidence type="ECO:0000305" key="8"/>